<comment type="catalytic activity">
    <reaction evidence="1">
        <text>(6S)-5,6,7,8-tetrahydrofolate + formate + ATP = (6R)-10-formyltetrahydrofolate + ADP + phosphate</text>
        <dbReference type="Rhea" id="RHEA:20221"/>
        <dbReference type="ChEBI" id="CHEBI:15740"/>
        <dbReference type="ChEBI" id="CHEBI:30616"/>
        <dbReference type="ChEBI" id="CHEBI:43474"/>
        <dbReference type="ChEBI" id="CHEBI:57453"/>
        <dbReference type="ChEBI" id="CHEBI:195366"/>
        <dbReference type="ChEBI" id="CHEBI:456216"/>
        <dbReference type="EC" id="6.3.4.3"/>
    </reaction>
</comment>
<comment type="pathway">
    <text evidence="1">One-carbon metabolism; tetrahydrofolate interconversion.</text>
</comment>
<comment type="similarity">
    <text evidence="1">Belongs to the formate--tetrahydrofolate ligase family.</text>
</comment>
<name>FTHS_CLOCY</name>
<protein>
    <recommendedName>
        <fullName evidence="1">Formate--tetrahydrofolate ligase</fullName>
        <ecNumber evidence="1">6.3.4.3</ecNumber>
    </recommendedName>
    <alternativeName>
        <fullName evidence="1">Formyltetrahydrofolate synthetase</fullName>
        <shortName evidence="1">FHS</shortName>
        <shortName evidence="1">FTHFS</shortName>
    </alternativeName>
</protein>
<sequence>MKTDVQIAQEAQMKPITEVANYLGIQDDELELYGKYKAKVSLDVLERQKDKEDAKLVLVTAINPTPAGEGKTTTNVGLSMGLNKIGKRTITALREPSLGPCFGVKGGAAGGGYAQVVPMDDINLHFTGDFHAITSAHNLLAALLDNHLHQGNALNINPKKIVWKRVIDMNDRSLRNVIIGLGGNGDGFVRQAQFDITVASEIMAILCLATSMSDLKERLSKMIVAYAKDGSAVTAGQLEATGAMALLLKDAVKPNLVQTLENTPAFIHGGPFANIAHGCNSVLATKVALKLADYVVTEGGFGADLGAEKFFDIKSRFAGLKPNCDVSVATVRALKMNGGVPKTELAAENVEAVKKGVANLERHIENVAKFGVPAVVAINKFPLDTEAELKAVEDACNAKGADVVLSDVWANGGEGGVEMAKKVVEICEKNEANFAPLYDVNLSIPEKIEKIATTIYRADGVDFTSDCKKQIAELEKLGLDKMPICMAKTQYSFSDDPTLLGAPTGFRITVREVRVSAGAGFIVALTGNMMTMPGLPKVPAANGMDILESGEIIGLS</sequence>
<accession>Q07064</accession>
<gene>
    <name evidence="1" type="primary">fhs</name>
</gene>
<feature type="chain" id="PRO_0000199339" description="Formate--tetrahydrofolate ligase">
    <location>
        <begin position="1"/>
        <end position="556"/>
    </location>
</feature>
<feature type="binding site" evidence="1">
    <location>
        <begin position="65"/>
        <end position="72"/>
    </location>
    <ligand>
        <name>ATP</name>
        <dbReference type="ChEBI" id="CHEBI:30616"/>
    </ligand>
</feature>
<proteinExistence type="inferred from homology"/>
<evidence type="ECO:0000255" key="1">
    <source>
        <dbReference type="HAMAP-Rule" id="MF_01543"/>
    </source>
</evidence>
<keyword id="KW-0067">ATP-binding</keyword>
<keyword id="KW-0436">Ligase</keyword>
<keyword id="KW-0547">Nucleotide-binding</keyword>
<keyword id="KW-0554">One-carbon metabolism</keyword>
<reference key="1">
    <citation type="journal article" date="1993" name="Protein Sci.">
        <title>Sequence and expression of the gene for N10-formyltetrahydrofolate synthetase from Clostridium cylindrosporum.</title>
        <authorList>
            <person name="Rankin C.A."/>
            <person name="Haslam G.C."/>
            <person name="Himes R.H."/>
        </authorList>
    </citation>
    <scope>NUCLEOTIDE SEQUENCE [GENOMIC DNA]</scope>
</reference>
<organism>
    <name type="scientific">Clostridium cylindrosporum</name>
    <dbReference type="NCBI Taxonomy" id="1495"/>
    <lineage>
        <taxon>Bacteria</taxon>
        <taxon>Bacillati</taxon>
        <taxon>Bacillota</taxon>
        <taxon>Clostridia</taxon>
        <taxon>Eubacteriales</taxon>
        <taxon>Clostridiaceae</taxon>
        <taxon>Clostridium</taxon>
    </lineage>
</organism>
<dbReference type="EC" id="6.3.4.3" evidence="1"/>
<dbReference type="EMBL" id="L12465">
    <property type="protein sequence ID" value="AAA23239.1"/>
    <property type="molecule type" value="Genomic_DNA"/>
</dbReference>
<dbReference type="PIR" id="I40808">
    <property type="entry name" value="I40808"/>
</dbReference>
<dbReference type="SMR" id="Q07064"/>
<dbReference type="BioCyc" id="MetaCyc:MONOMER-13114"/>
<dbReference type="UniPathway" id="UPA00193"/>
<dbReference type="GO" id="GO:0005524">
    <property type="term" value="F:ATP binding"/>
    <property type="evidence" value="ECO:0007669"/>
    <property type="project" value="UniProtKB-UniRule"/>
</dbReference>
<dbReference type="GO" id="GO:0004329">
    <property type="term" value="F:formate-tetrahydrofolate ligase activity"/>
    <property type="evidence" value="ECO:0007669"/>
    <property type="project" value="UniProtKB-UniRule"/>
</dbReference>
<dbReference type="GO" id="GO:0035999">
    <property type="term" value="P:tetrahydrofolate interconversion"/>
    <property type="evidence" value="ECO:0007669"/>
    <property type="project" value="UniProtKB-UniRule"/>
</dbReference>
<dbReference type="CDD" id="cd00477">
    <property type="entry name" value="FTHFS"/>
    <property type="match status" value="1"/>
</dbReference>
<dbReference type="FunFam" id="3.30.1510.10:FF:000001">
    <property type="entry name" value="Formate--tetrahydrofolate ligase"/>
    <property type="match status" value="1"/>
</dbReference>
<dbReference type="FunFam" id="3.10.410.10:FF:000001">
    <property type="entry name" value="Putative formate--tetrahydrofolate ligase"/>
    <property type="match status" value="1"/>
</dbReference>
<dbReference type="Gene3D" id="3.30.1510.10">
    <property type="entry name" value="Domain 2, N(10)-formyltetrahydrofolate synthetase"/>
    <property type="match status" value="1"/>
</dbReference>
<dbReference type="Gene3D" id="3.10.410.10">
    <property type="entry name" value="Formyltetrahydrofolate synthetase, domain 3"/>
    <property type="match status" value="1"/>
</dbReference>
<dbReference type="Gene3D" id="3.40.50.300">
    <property type="entry name" value="P-loop containing nucleotide triphosphate hydrolases"/>
    <property type="match status" value="1"/>
</dbReference>
<dbReference type="HAMAP" id="MF_01543">
    <property type="entry name" value="FTHFS"/>
    <property type="match status" value="1"/>
</dbReference>
<dbReference type="InterPro" id="IPR000559">
    <property type="entry name" value="Formate_THF_ligase"/>
</dbReference>
<dbReference type="InterPro" id="IPR020628">
    <property type="entry name" value="Formate_THF_ligase_CS"/>
</dbReference>
<dbReference type="InterPro" id="IPR027417">
    <property type="entry name" value="P-loop_NTPase"/>
</dbReference>
<dbReference type="NCBIfam" id="NF010030">
    <property type="entry name" value="PRK13505.1"/>
    <property type="match status" value="1"/>
</dbReference>
<dbReference type="Pfam" id="PF01268">
    <property type="entry name" value="FTHFS"/>
    <property type="match status" value="1"/>
</dbReference>
<dbReference type="SUPFAM" id="SSF52540">
    <property type="entry name" value="P-loop containing nucleoside triphosphate hydrolases"/>
    <property type="match status" value="1"/>
</dbReference>
<dbReference type="PROSITE" id="PS00721">
    <property type="entry name" value="FTHFS_1"/>
    <property type="match status" value="1"/>
</dbReference>
<dbReference type="PROSITE" id="PS00722">
    <property type="entry name" value="FTHFS_2"/>
    <property type="match status" value="1"/>
</dbReference>